<keyword id="KW-1003">Cell membrane</keyword>
<keyword id="KW-0378">Hydrolase</keyword>
<keyword id="KW-0472">Membrane</keyword>
<keyword id="KW-0479">Metal-binding</keyword>
<keyword id="KW-0482">Metalloprotease</keyword>
<keyword id="KW-0645">Protease</keyword>
<keyword id="KW-1185">Reference proteome</keyword>
<keyword id="KW-0812">Transmembrane</keyword>
<keyword id="KW-1133">Transmembrane helix</keyword>
<keyword id="KW-0862">Zinc</keyword>
<reference key="1">
    <citation type="journal article" date="2001" name="DNA Res.">
        <title>Complete genome sequence of an aerobic thermoacidophilic Crenarchaeon, Sulfolobus tokodaii strain7.</title>
        <authorList>
            <person name="Kawarabayasi Y."/>
            <person name="Hino Y."/>
            <person name="Horikawa H."/>
            <person name="Jin-no K."/>
            <person name="Takahashi M."/>
            <person name="Sekine M."/>
            <person name="Baba S."/>
            <person name="Ankai A."/>
            <person name="Kosugi H."/>
            <person name="Hosoyama A."/>
            <person name="Fukui S."/>
            <person name="Nagai Y."/>
            <person name="Nishijima K."/>
            <person name="Otsuka R."/>
            <person name="Nakazawa H."/>
            <person name="Takamiya M."/>
            <person name="Kato Y."/>
            <person name="Yoshizawa T."/>
            <person name="Tanaka T."/>
            <person name="Kudoh Y."/>
            <person name="Yamazaki J."/>
            <person name="Kushida N."/>
            <person name="Oguchi A."/>
            <person name="Aoki K."/>
            <person name="Masuda S."/>
            <person name="Yanagii M."/>
            <person name="Nishimura M."/>
            <person name="Yamagishi A."/>
            <person name="Oshima T."/>
            <person name="Kikuchi H."/>
        </authorList>
    </citation>
    <scope>NUCLEOTIDE SEQUENCE [LARGE SCALE GENOMIC DNA]</scope>
    <source>
        <strain>DSM 16993 / JCM 10545 / NBRC 100140 / 7</strain>
    </source>
</reference>
<sequence>MEIGTSLKINMIIALFLTIVSEGIFSLVIINFLKFPVIFSIIFLLILWLIQWLISPYLVERNSVEVTRDDPSYGWVYELVENVARRAGIKTPRVFLVDEPYPNAFAYGNYVTGKRIGITIPLLQILTTEELESVIGHELGHIKHNDVEIGLAIGLIPSILGFISNILLTVGWATLIFAVDEFDILVGLTMLAIGGVLFVITFFLQLFVLWFNRLRESFADYFSYELFRERAWNLAKALAKIEIYMQNIRLDPFRGIIVTIPPTKVKESDPDLLIEDLLREKTNIFSDILSTHPHPAKRIKMIYKLTKPMIF</sequence>
<accession>Q973R2</accession>
<comment type="cofactor">
    <cofactor evidence="1">
        <name>Zn(2+)</name>
        <dbReference type="ChEBI" id="CHEBI:29105"/>
    </cofactor>
    <text evidence="1">Binds 1 zinc ion per subunit.</text>
</comment>
<comment type="subcellular location">
    <subcellularLocation>
        <location evidence="1">Cell membrane</location>
        <topology evidence="1">Multi-pass membrane protein</topology>
    </subcellularLocation>
</comment>
<comment type="similarity">
    <text evidence="1">Belongs to the peptidase M48B family.</text>
</comment>
<name>HTPX1_SULTO</name>
<protein>
    <recommendedName>
        <fullName evidence="1">Protease HtpX homolog 1</fullName>
        <ecNumber evidence="1">3.4.24.-</ecNumber>
    </recommendedName>
</protein>
<dbReference type="EC" id="3.4.24.-" evidence="1"/>
<dbReference type="EMBL" id="BA000023">
    <property type="protein sequence ID" value="BAB65848.1"/>
    <property type="molecule type" value="Genomic_DNA"/>
</dbReference>
<dbReference type="RefSeq" id="WP_010978831.1">
    <property type="nucleotide sequence ID" value="NC_003106.2"/>
</dbReference>
<dbReference type="STRING" id="273063.STK_08360"/>
<dbReference type="GeneID" id="1458798"/>
<dbReference type="KEGG" id="sto:STK_08360"/>
<dbReference type="PATRIC" id="fig|273063.9.peg.939"/>
<dbReference type="eggNOG" id="arCOG01331">
    <property type="taxonomic scope" value="Archaea"/>
</dbReference>
<dbReference type="OrthoDB" id="28389at2157"/>
<dbReference type="Proteomes" id="UP000001015">
    <property type="component" value="Chromosome"/>
</dbReference>
<dbReference type="GO" id="GO:0005886">
    <property type="term" value="C:plasma membrane"/>
    <property type="evidence" value="ECO:0007669"/>
    <property type="project" value="UniProtKB-SubCell"/>
</dbReference>
<dbReference type="GO" id="GO:0004222">
    <property type="term" value="F:metalloendopeptidase activity"/>
    <property type="evidence" value="ECO:0007669"/>
    <property type="project" value="UniProtKB-UniRule"/>
</dbReference>
<dbReference type="GO" id="GO:0008270">
    <property type="term" value="F:zinc ion binding"/>
    <property type="evidence" value="ECO:0007669"/>
    <property type="project" value="UniProtKB-UniRule"/>
</dbReference>
<dbReference type="GO" id="GO:0006508">
    <property type="term" value="P:proteolysis"/>
    <property type="evidence" value="ECO:0007669"/>
    <property type="project" value="UniProtKB-KW"/>
</dbReference>
<dbReference type="CDD" id="cd07338">
    <property type="entry name" value="M48B_HtpX_like"/>
    <property type="match status" value="1"/>
</dbReference>
<dbReference type="Gene3D" id="3.30.2010.10">
    <property type="entry name" value="Metalloproteases ('zincins'), catalytic domain"/>
    <property type="match status" value="1"/>
</dbReference>
<dbReference type="HAMAP" id="MF_00188">
    <property type="entry name" value="Pept_M48_protease_HtpX"/>
    <property type="match status" value="1"/>
</dbReference>
<dbReference type="InterPro" id="IPR050083">
    <property type="entry name" value="HtpX_protease"/>
</dbReference>
<dbReference type="InterPro" id="IPR022919">
    <property type="entry name" value="Pept_M48_protease_HtpX"/>
</dbReference>
<dbReference type="InterPro" id="IPR001915">
    <property type="entry name" value="Peptidase_M48"/>
</dbReference>
<dbReference type="PANTHER" id="PTHR43221">
    <property type="entry name" value="PROTEASE HTPX"/>
    <property type="match status" value="1"/>
</dbReference>
<dbReference type="PANTHER" id="PTHR43221:SF2">
    <property type="entry name" value="PROTEASE HTPX HOMOLOG"/>
    <property type="match status" value="1"/>
</dbReference>
<dbReference type="Pfam" id="PF01435">
    <property type="entry name" value="Peptidase_M48"/>
    <property type="match status" value="1"/>
</dbReference>
<feature type="chain" id="PRO_0000138932" description="Protease HtpX homolog 1">
    <location>
        <begin position="1"/>
        <end position="311"/>
    </location>
</feature>
<feature type="transmembrane region" description="Helical" evidence="1">
    <location>
        <begin position="12"/>
        <end position="32"/>
    </location>
</feature>
<feature type="transmembrane region" description="Helical" evidence="1">
    <location>
        <begin position="35"/>
        <end position="55"/>
    </location>
</feature>
<feature type="transmembrane region" description="Helical" evidence="1">
    <location>
        <begin position="159"/>
        <end position="179"/>
    </location>
</feature>
<feature type="transmembrane region" description="Helical" evidence="1">
    <location>
        <begin position="184"/>
        <end position="204"/>
    </location>
</feature>
<feature type="active site" evidence="1">
    <location>
        <position position="138"/>
    </location>
</feature>
<feature type="binding site" evidence="1">
    <location>
        <position position="137"/>
    </location>
    <ligand>
        <name>Zn(2+)</name>
        <dbReference type="ChEBI" id="CHEBI:29105"/>
        <note>catalytic</note>
    </ligand>
</feature>
<feature type="binding site" evidence="1">
    <location>
        <position position="141"/>
    </location>
    <ligand>
        <name>Zn(2+)</name>
        <dbReference type="ChEBI" id="CHEBI:29105"/>
        <note>catalytic</note>
    </ligand>
</feature>
<feature type="binding site" evidence="1">
    <location>
        <position position="216"/>
    </location>
    <ligand>
        <name>Zn(2+)</name>
        <dbReference type="ChEBI" id="CHEBI:29105"/>
        <note>catalytic</note>
    </ligand>
</feature>
<evidence type="ECO:0000255" key="1">
    <source>
        <dbReference type="HAMAP-Rule" id="MF_00188"/>
    </source>
</evidence>
<organism>
    <name type="scientific">Sulfurisphaera tokodaii (strain DSM 16993 / JCM 10545 / NBRC 100140 / 7)</name>
    <name type="common">Sulfolobus tokodaii</name>
    <dbReference type="NCBI Taxonomy" id="273063"/>
    <lineage>
        <taxon>Archaea</taxon>
        <taxon>Thermoproteota</taxon>
        <taxon>Thermoprotei</taxon>
        <taxon>Sulfolobales</taxon>
        <taxon>Sulfolobaceae</taxon>
        <taxon>Sulfurisphaera</taxon>
    </lineage>
</organism>
<gene>
    <name evidence="1" type="primary">htpX1</name>
    <name type="ordered locus">STK_08360</name>
</gene>
<proteinExistence type="inferred from homology"/>